<evidence type="ECO:0000255" key="1">
    <source>
        <dbReference type="HAMAP-Rule" id="MF_00282"/>
    </source>
</evidence>
<feature type="chain" id="PRO_0000126820" description="Phenylalanine--tRNA ligase alpha subunit">
    <location>
        <begin position="1"/>
        <end position="468"/>
    </location>
</feature>
<feature type="binding site" evidence="1">
    <location>
        <position position="311"/>
    </location>
    <ligand>
        <name>L-phenylalanine</name>
        <dbReference type="ChEBI" id="CHEBI:58095"/>
    </ligand>
</feature>
<feature type="binding site" evidence="1">
    <location>
        <begin position="350"/>
        <end position="352"/>
    </location>
    <ligand>
        <name>L-phenylalanine</name>
        <dbReference type="ChEBI" id="CHEBI:58095"/>
    </ligand>
</feature>
<feature type="binding site" evidence="1">
    <location>
        <position position="390"/>
    </location>
    <ligand>
        <name>L-phenylalanine</name>
        <dbReference type="ChEBI" id="CHEBI:58095"/>
    </ligand>
</feature>
<feature type="binding site" evidence="1">
    <location>
        <position position="392"/>
    </location>
    <ligand>
        <name>Mg(2+)</name>
        <dbReference type="ChEBI" id="CHEBI:18420"/>
        <note>shared with beta subunit</note>
    </ligand>
</feature>
<protein>
    <recommendedName>
        <fullName evidence="1">Phenylalanine--tRNA ligase alpha subunit</fullName>
        <ecNumber evidence="1">6.1.1.20</ecNumber>
    </recommendedName>
    <alternativeName>
        <fullName evidence="1">Phenylalanyl-tRNA synthetase alpha subunit</fullName>
        <shortName evidence="1">PheRS</shortName>
    </alternativeName>
</protein>
<proteinExistence type="inferred from homology"/>
<dbReference type="EC" id="6.1.1.20" evidence="1"/>
<dbReference type="EMBL" id="Y08257">
    <property type="protein sequence ID" value="CAA69551.1"/>
    <property type="molecule type" value="Genomic_DNA"/>
</dbReference>
<dbReference type="EMBL" id="AE006641">
    <property type="protein sequence ID" value="AAK40456.1"/>
    <property type="molecule type" value="Genomic_DNA"/>
</dbReference>
<dbReference type="PIR" id="S75389">
    <property type="entry name" value="S75389"/>
</dbReference>
<dbReference type="SMR" id="P95961"/>
<dbReference type="FunCoup" id="P95961">
    <property type="interactions" value="341"/>
</dbReference>
<dbReference type="STRING" id="273057.SSO0100"/>
<dbReference type="PaxDb" id="273057-SSO0100"/>
<dbReference type="EnsemblBacteria" id="AAK40456">
    <property type="protein sequence ID" value="AAK40456"/>
    <property type="gene ID" value="SSO0100"/>
</dbReference>
<dbReference type="KEGG" id="sso:SSO0100"/>
<dbReference type="PATRIC" id="fig|273057.12.peg.97"/>
<dbReference type="eggNOG" id="arCOG00410">
    <property type="taxonomic scope" value="Archaea"/>
</dbReference>
<dbReference type="HOGENOM" id="CLU_025086_2_2_2"/>
<dbReference type="InParanoid" id="P95961"/>
<dbReference type="PhylomeDB" id="P95961"/>
<dbReference type="Proteomes" id="UP000001974">
    <property type="component" value="Chromosome"/>
</dbReference>
<dbReference type="GO" id="GO:0005737">
    <property type="term" value="C:cytoplasm"/>
    <property type="evidence" value="ECO:0000318"/>
    <property type="project" value="GO_Central"/>
</dbReference>
<dbReference type="GO" id="GO:0005524">
    <property type="term" value="F:ATP binding"/>
    <property type="evidence" value="ECO:0007669"/>
    <property type="project" value="UniProtKB-UniRule"/>
</dbReference>
<dbReference type="GO" id="GO:0000287">
    <property type="term" value="F:magnesium ion binding"/>
    <property type="evidence" value="ECO:0007669"/>
    <property type="project" value="UniProtKB-UniRule"/>
</dbReference>
<dbReference type="GO" id="GO:0004826">
    <property type="term" value="F:phenylalanine-tRNA ligase activity"/>
    <property type="evidence" value="ECO:0000318"/>
    <property type="project" value="GO_Central"/>
</dbReference>
<dbReference type="GO" id="GO:0000049">
    <property type="term" value="F:tRNA binding"/>
    <property type="evidence" value="ECO:0007669"/>
    <property type="project" value="InterPro"/>
</dbReference>
<dbReference type="GO" id="GO:0006432">
    <property type="term" value="P:phenylalanyl-tRNA aminoacylation"/>
    <property type="evidence" value="ECO:0000318"/>
    <property type="project" value="GO_Central"/>
</dbReference>
<dbReference type="CDD" id="cd00496">
    <property type="entry name" value="PheRS_alpha_core"/>
    <property type="match status" value="1"/>
</dbReference>
<dbReference type="Gene3D" id="3.30.930.10">
    <property type="entry name" value="Bira Bifunctional Protein, Domain 2"/>
    <property type="match status" value="1"/>
</dbReference>
<dbReference type="Gene3D" id="1.10.10.10">
    <property type="entry name" value="Winged helix-like DNA-binding domain superfamily/Winged helix DNA-binding domain"/>
    <property type="match status" value="1"/>
</dbReference>
<dbReference type="HAMAP" id="MF_00282">
    <property type="entry name" value="Phe_tRNA_synth_alpha2"/>
    <property type="match status" value="1"/>
</dbReference>
<dbReference type="InterPro" id="IPR006195">
    <property type="entry name" value="aa-tRNA-synth_II"/>
</dbReference>
<dbReference type="InterPro" id="IPR045864">
    <property type="entry name" value="aa-tRNA-synth_II/BPL/LPL"/>
</dbReference>
<dbReference type="InterPro" id="IPR004529">
    <property type="entry name" value="Phe-tRNA-synth_IIc_asu"/>
</dbReference>
<dbReference type="InterPro" id="IPR022917">
    <property type="entry name" value="Phe_tRNA_ligase_alpha_bac/arc"/>
</dbReference>
<dbReference type="InterPro" id="IPR002319">
    <property type="entry name" value="Phenylalanyl-tRNA_Synthase"/>
</dbReference>
<dbReference type="InterPro" id="IPR036388">
    <property type="entry name" value="WH-like_DNA-bd_sf"/>
</dbReference>
<dbReference type="InterPro" id="IPR036390">
    <property type="entry name" value="WH_DNA-bd_sf"/>
</dbReference>
<dbReference type="NCBIfam" id="TIGR00468">
    <property type="entry name" value="pheS"/>
    <property type="match status" value="1"/>
</dbReference>
<dbReference type="NCBIfam" id="NF003210">
    <property type="entry name" value="PRK04172.1"/>
    <property type="match status" value="1"/>
</dbReference>
<dbReference type="PANTHER" id="PTHR11538:SF40">
    <property type="entry name" value="PHENYLALANINE--TRNA LIGASE ALPHA SUBUNIT"/>
    <property type="match status" value="1"/>
</dbReference>
<dbReference type="PANTHER" id="PTHR11538">
    <property type="entry name" value="PHENYLALANYL-TRNA SYNTHETASE"/>
    <property type="match status" value="1"/>
</dbReference>
<dbReference type="Pfam" id="PF01409">
    <property type="entry name" value="tRNA-synt_2d"/>
    <property type="match status" value="1"/>
</dbReference>
<dbReference type="SUPFAM" id="SSF55681">
    <property type="entry name" value="Class II aaRS and biotin synthetases"/>
    <property type="match status" value="1"/>
</dbReference>
<dbReference type="SUPFAM" id="SSF46785">
    <property type="entry name" value="Winged helix' DNA-binding domain"/>
    <property type="match status" value="1"/>
</dbReference>
<dbReference type="PROSITE" id="PS50862">
    <property type="entry name" value="AA_TRNA_LIGASE_II"/>
    <property type="match status" value="1"/>
</dbReference>
<gene>
    <name evidence="1" type="primary">pheS</name>
    <name type="ordered locus">SSO0100</name>
    <name type="ORF">C04_022</name>
</gene>
<accession>P95961</accession>
<reference key="1">
    <citation type="journal article" date="1996" name="Mol. Microbiol.">
        <title>Organizational characteristics and information content of an archaeal genome: 156 kb of sequence from Sulfolobus solfataricus P2.</title>
        <authorList>
            <person name="Sensen C.W."/>
            <person name="Klenk H.-P."/>
            <person name="Singh R.K."/>
            <person name="Allard G."/>
            <person name="Chan C.C.-Y."/>
            <person name="Liu Q.Y."/>
            <person name="Penny S.L."/>
            <person name="Young F."/>
            <person name="Schenk M.E."/>
            <person name="Gaasterland T."/>
            <person name="Doolittle W.F."/>
            <person name="Ragan M.A."/>
            <person name="Charlebois R.L."/>
        </authorList>
    </citation>
    <scope>NUCLEOTIDE SEQUENCE [GENOMIC DNA]</scope>
    <source>
        <strain>ATCC 35092 / DSM 1617 / JCM 11322 / P2</strain>
    </source>
</reference>
<reference key="2">
    <citation type="journal article" date="2001" name="Proc. Natl. Acad. Sci. U.S.A.">
        <title>The complete genome of the crenarchaeon Sulfolobus solfataricus P2.</title>
        <authorList>
            <person name="She Q."/>
            <person name="Singh R.K."/>
            <person name="Confalonieri F."/>
            <person name="Zivanovic Y."/>
            <person name="Allard G."/>
            <person name="Awayez M.J."/>
            <person name="Chan-Weiher C.C.-Y."/>
            <person name="Clausen I.G."/>
            <person name="Curtis B.A."/>
            <person name="De Moors A."/>
            <person name="Erauso G."/>
            <person name="Fletcher C."/>
            <person name="Gordon P.M.K."/>
            <person name="Heikamp-de Jong I."/>
            <person name="Jeffries A.C."/>
            <person name="Kozera C.J."/>
            <person name="Medina N."/>
            <person name="Peng X."/>
            <person name="Thi-Ngoc H.P."/>
            <person name="Redder P."/>
            <person name="Schenk M.E."/>
            <person name="Theriault C."/>
            <person name="Tolstrup N."/>
            <person name="Charlebois R.L."/>
            <person name="Doolittle W.F."/>
            <person name="Duguet M."/>
            <person name="Gaasterland T."/>
            <person name="Garrett R.A."/>
            <person name="Ragan M.A."/>
            <person name="Sensen C.W."/>
            <person name="Van der Oost J."/>
        </authorList>
    </citation>
    <scope>NUCLEOTIDE SEQUENCE [LARGE SCALE GENOMIC DNA]</scope>
    <source>
        <strain>ATCC 35092 / DSM 1617 / JCM 11322 / P2</strain>
    </source>
</reference>
<keyword id="KW-0030">Aminoacyl-tRNA synthetase</keyword>
<keyword id="KW-0067">ATP-binding</keyword>
<keyword id="KW-0963">Cytoplasm</keyword>
<keyword id="KW-0436">Ligase</keyword>
<keyword id="KW-0460">Magnesium</keyword>
<keyword id="KW-0479">Metal-binding</keyword>
<keyword id="KW-0547">Nucleotide-binding</keyword>
<keyword id="KW-0648">Protein biosynthesis</keyword>
<keyword id="KW-1185">Reference proteome</keyword>
<name>SYFA_SACS2</name>
<organism>
    <name type="scientific">Saccharolobus solfataricus (strain ATCC 35092 / DSM 1617 / JCM 11322 / P2)</name>
    <name type="common">Sulfolobus solfataricus</name>
    <dbReference type="NCBI Taxonomy" id="273057"/>
    <lineage>
        <taxon>Archaea</taxon>
        <taxon>Thermoproteota</taxon>
        <taxon>Thermoprotei</taxon>
        <taxon>Sulfolobales</taxon>
        <taxon>Sulfolobaceae</taxon>
        <taxon>Saccharolobus</taxon>
    </lineage>
</organism>
<comment type="catalytic activity">
    <reaction evidence="1">
        <text>tRNA(Phe) + L-phenylalanine + ATP = L-phenylalanyl-tRNA(Phe) + AMP + diphosphate + H(+)</text>
        <dbReference type="Rhea" id="RHEA:19413"/>
        <dbReference type="Rhea" id="RHEA-COMP:9668"/>
        <dbReference type="Rhea" id="RHEA-COMP:9699"/>
        <dbReference type="ChEBI" id="CHEBI:15378"/>
        <dbReference type="ChEBI" id="CHEBI:30616"/>
        <dbReference type="ChEBI" id="CHEBI:33019"/>
        <dbReference type="ChEBI" id="CHEBI:58095"/>
        <dbReference type="ChEBI" id="CHEBI:78442"/>
        <dbReference type="ChEBI" id="CHEBI:78531"/>
        <dbReference type="ChEBI" id="CHEBI:456215"/>
        <dbReference type="EC" id="6.1.1.20"/>
    </reaction>
</comment>
<comment type="cofactor">
    <cofactor evidence="1">
        <name>Mg(2+)</name>
        <dbReference type="ChEBI" id="CHEBI:18420"/>
    </cofactor>
    <text evidence="1">Binds 2 magnesium ions per tetramer.</text>
</comment>
<comment type="subunit">
    <text evidence="1">Tetramer of two alpha and two beta subunits.</text>
</comment>
<comment type="subcellular location">
    <subcellularLocation>
        <location evidence="1">Cytoplasm</location>
    </subcellularLocation>
</comment>
<comment type="similarity">
    <text evidence="1">Belongs to the class-II aminoacyl-tRNA synthetase family. Phe-tRNA synthetase alpha subunit type 2 subfamily.</text>
</comment>
<sequence length="468" mass="54102">MISMLSENEAKILFFLKDLKKTNSVELAIKMGIPESSVLSLIELLREKGYVKTEVKSEKHYVLTEEGRKRKESGLPEDILINTLNGQEKDLNEIKNILNKDFNIAISWAKRKGLIDIKEGKVIPKVKTYMSSEYLALSNLERADSNTINLLKKRGLIEEKERKIVSVELIKEPKESEIGISNLNRELIISGEWKKYKLKKYNVEAFPPYYTISKKHYFREFLEKVKDIMISLGFKEINTGYIEMEFYNFDLLFQPQDHPAREIHDSFSVEGSGKIEDKDLLNNVKEIHEKFWKYEWKQDITLRLMLRSQTTATTARVLASRPKAPQKVFTLGKVFRPDAIDATHLIEFHQLDGVIIDNNFTFKELLGVLKEIFYRLGIKEVKFKPAYFPFTEPSVEAYGYLEKLGWVEMCGAGLLRPEILSSVGIDSTAGAWGIGIERLAMSFLNISDIRLLYSNNIEYIRDTKVKIE</sequence>